<evidence type="ECO:0000255" key="1">
    <source>
        <dbReference type="HAMAP-Rule" id="MF_00115"/>
    </source>
</evidence>
<evidence type="ECO:0000305" key="2"/>
<keyword id="KW-0997">Cell inner membrane</keyword>
<keyword id="KW-1003">Cell membrane</keyword>
<keyword id="KW-0407">Ion channel</keyword>
<keyword id="KW-0406">Ion transport</keyword>
<keyword id="KW-0472">Membrane</keyword>
<keyword id="KW-0812">Transmembrane</keyword>
<keyword id="KW-1133">Transmembrane helix</keyword>
<keyword id="KW-0813">Transport</keyword>
<gene>
    <name evidence="1" type="primary">mscL</name>
    <name type="ordered locus">BURPS1710b_2521</name>
</gene>
<accession>Q3JR90</accession>
<protein>
    <recommendedName>
        <fullName evidence="1">Large-conductance mechanosensitive channel</fullName>
    </recommendedName>
</protein>
<feature type="chain" id="PRO_0000237988" description="Large-conductance mechanosensitive channel">
    <location>
        <begin position="1"/>
        <end position="143"/>
    </location>
</feature>
<feature type="transmembrane region" description="Helical" evidence="1">
    <location>
        <begin position="10"/>
        <end position="30"/>
    </location>
</feature>
<feature type="transmembrane region" description="Helical" evidence="1">
    <location>
        <begin position="89"/>
        <end position="109"/>
    </location>
</feature>
<reference key="1">
    <citation type="journal article" date="2010" name="Genome Biol. Evol.">
        <title>Continuing evolution of Burkholderia mallei through genome reduction and large-scale rearrangements.</title>
        <authorList>
            <person name="Losada L."/>
            <person name="Ronning C.M."/>
            <person name="DeShazer D."/>
            <person name="Woods D."/>
            <person name="Fedorova N."/>
            <person name="Kim H.S."/>
            <person name="Shabalina S.A."/>
            <person name="Pearson T.R."/>
            <person name="Brinkac L."/>
            <person name="Tan P."/>
            <person name="Nandi T."/>
            <person name="Crabtree J."/>
            <person name="Badger J."/>
            <person name="Beckstrom-Sternberg S."/>
            <person name="Saqib M."/>
            <person name="Schutzer S.E."/>
            <person name="Keim P."/>
            <person name="Nierman W.C."/>
        </authorList>
    </citation>
    <scope>NUCLEOTIDE SEQUENCE [LARGE SCALE GENOMIC DNA]</scope>
    <source>
        <strain>1710b</strain>
    </source>
</reference>
<proteinExistence type="inferred from homology"/>
<organism>
    <name type="scientific">Burkholderia pseudomallei (strain 1710b)</name>
    <dbReference type="NCBI Taxonomy" id="320372"/>
    <lineage>
        <taxon>Bacteria</taxon>
        <taxon>Pseudomonadati</taxon>
        <taxon>Pseudomonadota</taxon>
        <taxon>Betaproteobacteria</taxon>
        <taxon>Burkholderiales</taxon>
        <taxon>Burkholderiaceae</taxon>
        <taxon>Burkholderia</taxon>
        <taxon>pseudomallei group</taxon>
    </lineage>
</organism>
<comment type="function">
    <text evidence="1">Channel that opens in response to stretch forces in the membrane lipid bilayer. May participate in the regulation of osmotic pressure changes within the cell.</text>
</comment>
<comment type="subunit">
    <text evidence="1">Homopentamer.</text>
</comment>
<comment type="subcellular location">
    <subcellularLocation>
        <location evidence="1">Cell inner membrane</location>
        <topology evidence="1">Multi-pass membrane protein</topology>
    </subcellularLocation>
</comment>
<comment type="similarity">
    <text evidence="1">Belongs to the MscL family.</text>
</comment>
<comment type="sequence caution" evidence="2">
    <conflict type="erroneous initiation">
        <sequence resource="EMBL-CDS" id="ABA49829"/>
    </conflict>
</comment>
<dbReference type="EMBL" id="CP000124">
    <property type="protein sequence ID" value="ABA49829.1"/>
    <property type="status" value="ALT_INIT"/>
    <property type="molecule type" value="Genomic_DNA"/>
</dbReference>
<dbReference type="RefSeq" id="WP_004192898.1">
    <property type="nucleotide sequence ID" value="NC_007434.1"/>
</dbReference>
<dbReference type="SMR" id="Q3JR90"/>
<dbReference type="EnsemblBacteria" id="ABA49829">
    <property type="protein sequence ID" value="ABA49829"/>
    <property type="gene ID" value="BURPS1710b_2521"/>
</dbReference>
<dbReference type="GeneID" id="93060637"/>
<dbReference type="KEGG" id="bpm:BURPS1710b_2521"/>
<dbReference type="HOGENOM" id="CLU_095787_0_1_4"/>
<dbReference type="Proteomes" id="UP000002700">
    <property type="component" value="Chromosome I"/>
</dbReference>
<dbReference type="GO" id="GO:0005886">
    <property type="term" value="C:plasma membrane"/>
    <property type="evidence" value="ECO:0007669"/>
    <property type="project" value="UniProtKB-SubCell"/>
</dbReference>
<dbReference type="GO" id="GO:0008381">
    <property type="term" value="F:mechanosensitive monoatomic ion channel activity"/>
    <property type="evidence" value="ECO:0007669"/>
    <property type="project" value="UniProtKB-UniRule"/>
</dbReference>
<dbReference type="Gene3D" id="1.10.1200.120">
    <property type="entry name" value="Large-conductance mechanosensitive channel, MscL, domain 1"/>
    <property type="match status" value="1"/>
</dbReference>
<dbReference type="HAMAP" id="MF_00115">
    <property type="entry name" value="MscL"/>
    <property type="match status" value="1"/>
</dbReference>
<dbReference type="InterPro" id="IPR019823">
    <property type="entry name" value="Mechanosensitive_channel_CS"/>
</dbReference>
<dbReference type="InterPro" id="IPR001185">
    <property type="entry name" value="MS_channel"/>
</dbReference>
<dbReference type="InterPro" id="IPR037673">
    <property type="entry name" value="MSC/AndL"/>
</dbReference>
<dbReference type="InterPro" id="IPR036019">
    <property type="entry name" value="MscL_channel"/>
</dbReference>
<dbReference type="NCBIfam" id="TIGR00220">
    <property type="entry name" value="mscL"/>
    <property type="match status" value="1"/>
</dbReference>
<dbReference type="NCBIfam" id="NF001843">
    <property type="entry name" value="PRK00567.1-4"/>
    <property type="match status" value="1"/>
</dbReference>
<dbReference type="NCBIfam" id="NF010557">
    <property type="entry name" value="PRK13952.1"/>
    <property type="match status" value="1"/>
</dbReference>
<dbReference type="PANTHER" id="PTHR30266:SF2">
    <property type="entry name" value="LARGE-CONDUCTANCE MECHANOSENSITIVE CHANNEL"/>
    <property type="match status" value="1"/>
</dbReference>
<dbReference type="PANTHER" id="PTHR30266">
    <property type="entry name" value="MECHANOSENSITIVE CHANNEL MSCL"/>
    <property type="match status" value="1"/>
</dbReference>
<dbReference type="Pfam" id="PF01741">
    <property type="entry name" value="MscL"/>
    <property type="match status" value="1"/>
</dbReference>
<dbReference type="PRINTS" id="PR01264">
    <property type="entry name" value="MECHCHANNEL"/>
</dbReference>
<dbReference type="SUPFAM" id="SSF81330">
    <property type="entry name" value="Gated mechanosensitive channel"/>
    <property type="match status" value="1"/>
</dbReference>
<dbReference type="PROSITE" id="PS01327">
    <property type="entry name" value="MSCL"/>
    <property type="match status" value="1"/>
</dbReference>
<sequence>MSIIKEFKEFAVKGNVMDLAIGVIIGGAFSKIVDSVVKDLIMPVIGVLTGGLDFSNKFVLLGQIPASFKGNPESFKDLQAAGVATFGYGSFITVLINFIILAFIIFLMVKFINKLRKPEEAAPAATPEDVLLLREIRDSLKQR</sequence>
<name>MSCL_BURP1</name>